<name>PRMA_STAA8</name>
<dbReference type="EC" id="2.1.1.-" evidence="1"/>
<dbReference type="EMBL" id="CP000253">
    <property type="protein sequence ID" value="ABD30755.1"/>
    <property type="molecule type" value="Genomic_DNA"/>
</dbReference>
<dbReference type="RefSeq" id="WP_001104611.1">
    <property type="nucleotide sequence ID" value="NZ_LS483365.1"/>
</dbReference>
<dbReference type="RefSeq" id="YP_500191.1">
    <property type="nucleotide sequence ID" value="NC_007795.1"/>
</dbReference>
<dbReference type="SMR" id="Q2FXZ4"/>
<dbReference type="STRING" id="93061.SAOUHSC_01681"/>
<dbReference type="PaxDb" id="1280-SAXN108_1604"/>
<dbReference type="GeneID" id="3921793"/>
<dbReference type="KEGG" id="sao:SAOUHSC_01681"/>
<dbReference type="PATRIC" id="fig|93061.5.peg.1529"/>
<dbReference type="eggNOG" id="COG2264">
    <property type="taxonomic scope" value="Bacteria"/>
</dbReference>
<dbReference type="HOGENOM" id="CLU_049382_0_1_9"/>
<dbReference type="OrthoDB" id="9785995at2"/>
<dbReference type="PRO" id="PR:Q2FXZ4"/>
<dbReference type="Proteomes" id="UP000008816">
    <property type="component" value="Chromosome"/>
</dbReference>
<dbReference type="GO" id="GO:0005737">
    <property type="term" value="C:cytoplasm"/>
    <property type="evidence" value="ECO:0007669"/>
    <property type="project" value="UniProtKB-SubCell"/>
</dbReference>
<dbReference type="GO" id="GO:0008276">
    <property type="term" value="F:protein methyltransferase activity"/>
    <property type="evidence" value="ECO:0000318"/>
    <property type="project" value="GO_Central"/>
</dbReference>
<dbReference type="GO" id="GO:0016279">
    <property type="term" value="F:protein-lysine N-methyltransferase activity"/>
    <property type="evidence" value="ECO:0007669"/>
    <property type="project" value="RHEA"/>
</dbReference>
<dbReference type="GO" id="GO:0032259">
    <property type="term" value="P:methylation"/>
    <property type="evidence" value="ECO:0007669"/>
    <property type="project" value="UniProtKB-KW"/>
</dbReference>
<dbReference type="CDD" id="cd02440">
    <property type="entry name" value="AdoMet_MTases"/>
    <property type="match status" value="1"/>
</dbReference>
<dbReference type="Gene3D" id="3.40.50.150">
    <property type="entry name" value="Vaccinia Virus protein VP39"/>
    <property type="match status" value="1"/>
</dbReference>
<dbReference type="HAMAP" id="MF_00735">
    <property type="entry name" value="Methyltr_PrmA"/>
    <property type="match status" value="1"/>
</dbReference>
<dbReference type="InterPro" id="IPR050078">
    <property type="entry name" value="Ribosomal_L11_MeTrfase_PrmA"/>
</dbReference>
<dbReference type="InterPro" id="IPR004498">
    <property type="entry name" value="Ribosomal_PrmA_MeTrfase"/>
</dbReference>
<dbReference type="InterPro" id="IPR029063">
    <property type="entry name" value="SAM-dependent_MTases_sf"/>
</dbReference>
<dbReference type="NCBIfam" id="TIGR00406">
    <property type="entry name" value="prmA"/>
    <property type="match status" value="1"/>
</dbReference>
<dbReference type="PANTHER" id="PTHR43648">
    <property type="entry name" value="ELECTRON TRANSFER FLAVOPROTEIN BETA SUBUNIT LYSINE METHYLTRANSFERASE"/>
    <property type="match status" value="1"/>
</dbReference>
<dbReference type="PANTHER" id="PTHR43648:SF1">
    <property type="entry name" value="ELECTRON TRANSFER FLAVOPROTEIN BETA SUBUNIT LYSINE METHYLTRANSFERASE"/>
    <property type="match status" value="1"/>
</dbReference>
<dbReference type="Pfam" id="PF06325">
    <property type="entry name" value="PrmA"/>
    <property type="match status" value="1"/>
</dbReference>
<dbReference type="PIRSF" id="PIRSF000401">
    <property type="entry name" value="RPL11_MTase"/>
    <property type="match status" value="1"/>
</dbReference>
<dbReference type="SUPFAM" id="SSF53335">
    <property type="entry name" value="S-adenosyl-L-methionine-dependent methyltransferases"/>
    <property type="match status" value="1"/>
</dbReference>
<comment type="function">
    <text evidence="1">Methylates ribosomal protein L11.</text>
</comment>
<comment type="catalytic activity">
    <reaction evidence="1">
        <text>L-lysyl-[protein] + 3 S-adenosyl-L-methionine = N(6),N(6),N(6)-trimethyl-L-lysyl-[protein] + 3 S-adenosyl-L-homocysteine + 3 H(+)</text>
        <dbReference type="Rhea" id="RHEA:54192"/>
        <dbReference type="Rhea" id="RHEA-COMP:9752"/>
        <dbReference type="Rhea" id="RHEA-COMP:13826"/>
        <dbReference type="ChEBI" id="CHEBI:15378"/>
        <dbReference type="ChEBI" id="CHEBI:29969"/>
        <dbReference type="ChEBI" id="CHEBI:57856"/>
        <dbReference type="ChEBI" id="CHEBI:59789"/>
        <dbReference type="ChEBI" id="CHEBI:61961"/>
    </reaction>
</comment>
<comment type="subcellular location">
    <subcellularLocation>
        <location evidence="1">Cytoplasm</location>
    </subcellularLocation>
</comment>
<comment type="similarity">
    <text evidence="1">Belongs to the methyltransferase superfamily. PrmA family.</text>
</comment>
<proteinExistence type="inferred from homology"/>
<organism>
    <name type="scientific">Staphylococcus aureus (strain NCTC 8325 / PS 47)</name>
    <dbReference type="NCBI Taxonomy" id="93061"/>
    <lineage>
        <taxon>Bacteria</taxon>
        <taxon>Bacillati</taxon>
        <taxon>Bacillota</taxon>
        <taxon>Bacilli</taxon>
        <taxon>Bacillales</taxon>
        <taxon>Staphylococcaceae</taxon>
        <taxon>Staphylococcus</taxon>
    </lineage>
</organism>
<feature type="chain" id="PRO_1000046101" description="Ribosomal protein L11 methyltransferase">
    <location>
        <begin position="1"/>
        <end position="312"/>
    </location>
</feature>
<feature type="binding site" evidence="1">
    <location>
        <position position="160"/>
    </location>
    <ligand>
        <name>S-adenosyl-L-methionine</name>
        <dbReference type="ChEBI" id="CHEBI:59789"/>
    </ligand>
</feature>
<feature type="binding site" evidence="1">
    <location>
        <position position="181"/>
    </location>
    <ligand>
        <name>S-adenosyl-L-methionine</name>
        <dbReference type="ChEBI" id="CHEBI:59789"/>
    </ligand>
</feature>
<feature type="binding site" evidence="1">
    <location>
        <position position="203"/>
    </location>
    <ligand>
        <name>S-adenosyl-L-methionine</name>
        <dbReference type="ChEBI" id="CHEBI:59789"/>
    </ligand>
</feature>
<feature type="binding site" evidence="1">
    <location>
        <position position="246"/>
    </location>
    <ligand>
        <name>S-adenosyl-L-methionine</name>
        <dbReference type="ChEBI" id="CHEBI:59789"/>
    </ligand>
</feature>
<sequence length="312" mass="35513">MNWTELSIIINHEAVELATNILENHGSNGVVIEDSDDLINQPEDKYGEIYALKKEDYPDKGVRLKAYFNEMTYDDKLRQQIKDELLNLDELDQHNVQFSEQIIAETDWENEWKNYFHPFRASKKFTIVPSWETYAKEADEELCIELDPGMAFGTGDHPTTSMCLKAIETYVLPQHSVIDVGTGSGILSIASHLIGVKRIKALDIDEMAVSVAKENFRRNHCETLIEAVPGNLLKDETEKFDIVIANILAHIIDEMIEDAYNTLNEGGYFITSGIIKEKYEGIQSHMERVGFKIISEQHDNGWVCLVGQKVSE</sequence>
<protein>
    <recommendedName>
        <fullName evidence="1">Ribosomal protein L11 methyltransferase</fullName>
        <shortName evidence="1">L11 Mtase</shortName>
        <ecNumber evidence="1">2.1.1.-</ecNumber>
    </recommendedName>
</protein>
<evidence type="ECO:0000255" key="1">
    <source>
        <dbReference type="HAMAP-Rule" id="MF_00735"/>
    </source>
</evidence>
<accession>Q2FXZ4</accession>
<reference key="1">
    <citation type="book" date="2006" name="Gram positive pathogens, 2nd edition">
        <title>The Staphylococcus aureus NCTC 8325 genome.</title>
        <editorList>
            <person name="Fischetti V."/>
            <person name="Novick R."/>
            <person name="Ferretti J."/>
            <person name="Portnoy D."/>
            <person name="Rood J."/>
        </editorList>
        <authorList>
            <person name="Gillaspy A.F."/>
            <person name="Worrell V."/>
            <person name="Orvis J."/>
            <person name="Roe B.A."/>
            <person name="Dyer D.W."/>
            <person name="Iandolo J.J."/>
        </authorList>
    </citation>
    <scope>NUCLEOTIDE SEQUENCE [LARGE SCALE GENOMIC DNA]</scope>
    <source>
        <strain>NCTC 8325 / PS 47</strain>
    </source>
</reference>
<keyword id="KW-0963">Cytoplasm</keyword>
<keyword id="KW-0489">Methyltransferase</keyword>
<keyword id="KW-1185">Reference proteome</keyword>
<keyword id="KW-0949">S-adenosyl-L-methionine</keyword>
<keyword id="KW-0808">Transferase</keyword>
<gene>
    <name evidence="1" type="primary">prmA</name>
    <name type="ordered locus">SAOUHSC_01681</name>
</gene>